<organism>
    <name type="scientific">Mesomycoplasma hyopneumoniae (strain 7448)</name>
    <name type="common">Mycoplasma hyopneumoniae</name>
    <dbReference type="NCBI Taxonomy" id="262722"/>
    <lineage>
        <taxon>Bacteria</taxon>
        <taxon>Bacillati</taxon>
        <taxon>Mycoplasmatota</taxon>
        <taxon>Mycoplasmoidales</taxon>
        <taxon>Metamycoplasmataceae</taxon>
        <taxon>Mesomycoplasma</taxon>
    </lineage>
</organism>
<dbReference type="EC" id="6.1.1.21" evidence="1"/>
<dbReference type="EMBL" id="AE017244">
    <property type="protein sequence ID" value="AAZ53616.1"/>
    <property type="molecule type" value="Genomic_DNA"/>
</dbReference>
<dbReference type="RefSeq" id="WP_011290103.1">
    <property type="nucleotide sequence ID" value="NC_007332.1"/>
</dbReference>
<dbReference type="SMR" id="Q4A8C3"/>
<dbReference type="KEGG" id="mhp:MHP7448_0242"/>
<dbReference type="HOGENOM" id="CLU_025113_1_2_14"/>
<dbReference type="Proteomes" id="UP000000553">
    <property type="component" value="Chromosome"/>
</dbReference>
<dbReference type="GO" id="GO:0005737">
    <property type="term" value="C:cytoplasm"/>
    <property type="evidence" value="ECO:0007669"/>
    <property type="project" value="UniProtKB-SubCell"/>
</dbReference>
<dbReference type="GO" id="GO:0005524">
    <property type="term" value="F:ATP binding"/>
    <property type="evidence" value="ECO:0007669"/>
    <property type="project" value="UniProtKB-UniRule"/>
</dbReference>
<dbReference type="GO" id="GO:0004821">
    <property type="term" value="F:histidine-tRNA ligase activity"/>
    <property type="evidence" value="ECO:0007669"/>
    <property type="project" value="UniProtKB-UniRule"/>
</dbReference>
<dbReference type="GO" id="GO:0006427">
    <property type="term" value="P:histidyl-tRNA aminoacylation"/>
    <property type="evidence" value="ECO:0007669"/>
    <property type="project" value="UniProtKB-UniRule"/>
</dbReference>
<dbReference type="CDD" id="cd00773">
    <property type="entry name" value="HisRS-like_core"/>
    <property type="match status" value="1"/>
</dbReference>
<dbReference type="Gene3D" id="3.40.50.800">
    <property type="entry name" value="Anticodon-binding domain"/>
    <property type="match status" value="1"/>
</dbReference>
<dbReference type="Gene3D" id="3.30.930.10">
    <property type="entry name" value="Bira Bifunctional Protein, Domain 2"/>
    <property type="match status" value="1"/>
</dbReference>
<dbReference type="HAMAP" id="MF_00127">
    <property type="entry name" value="His_tRNA_synth"/>
    <property type="match status" value="1"/>
</dbReference>
<dbReference type="InterPro" id="IPR006195">
    <property type="entry name" value="aa-tRNA-synth_II"/>
</dbReference>
<dbReference type="InterPro" id="IPR045864">
    <property type="entry name" value="aa-tRNA-synth_II/BPL/LPL"/>
</dbReference>
<dbReference type="InterPro" id="IPR036621">
    <property type="entry name" value="Anticodon-bd_dom_sf"/>
</dbReference>
<dbReference type="InterPro" id="IPR015807">
    <property type="entry name" value="His-tRNA-ligase"/>
</dbReference>
<dbReference type="InterPro" id="IPR041715">
    <property type="entry name" value="HisRS-like_core"/>
</dbReference>
<dbReference type="InterPro" id="IPR004516">
    <property type="entry name" value="HisRS/HisZ"/>
</dbReference>
<dbReference type="NCBIfam" id="TIGR00442">
    <property type="entry name" value="hisS"/>
    <property type="match status" value="1"/>
</dbReference>
<dbReference type="PANTHER" id="PTHR43707:SF1">
    <property type="entry name" value="HISTIDINE--TRNA LIGASE, MITOCHONDRIAL-RELATED"/>
    <property type="match status" value="1"/>
</dbReference>
<dbReference type="PANTHER" id="PTHR43707">
    <property type="entry name" value="HISTIDYL-TRNA SYNTHETASE"/>
    <property type="match status" value="1"/>
</dbReference>
<dbReference type="Pfam" id="PF13393">
    <property type="entry name" value="tRNA-synt_His"/>
    <property type="match status" value="1"/>
</dbReference>
<dbReference type="PIRSF" id="PIRSF001549">
    <property type="entry name" value="His-tRNA_synth"/>
    <property type="match status" value="1"/>
</dbReference>
<dbReference type="SUPFAM" id="SSF52954">
    <property type="entry name" value="Class II aaRS ABD-related"/>
    <property type="match status" value="1"/>
</dbReference>
<dbReference type="SUPFAM" id="SSF55681">
    <property type="entry name" value="Class II aaRS and biotin synthetases"/>
    <property type="match status" value="1"/>
</dbReference>
<dbReference type="PROSITE" id="PS50862">
    <property type="entry name" value="AA_TRNA_LIGASE_II"/>
    <property type="match status" value="1"/>
</dbReference>
<feature type="chain" id="PRO_0000136200" description="Histidine--tRNA ligase">
    <location>
        <begin position="1"/>
        <end position="428"/>
    </location>
</feature>
<gene>
    <name evidence="1" type="primary">hisS</name>
    <name type="ordered locus">MHP7448_0242</name>
</gene>
<reference key="1">
    <citation type="journal article" date="2005" name="J. Bacteriol.">
        <title>Swine and poultry pathogens: the complete genome sequences of two strains of Mycoplasma hyopneumoniae and a strain of Mycoplasma synoviae.</title>
        <authorList>
            <person name="Vasconcelos A.T.R."/>
            <person name="Ferreira H.B."/>
            <person name="Bizarro C.V."/>
            <person name="Bonatto S.L."/>
            <person name="Carvalho M.O."/>
            <person name="Pinto P.M."/>
            <person name="Almeida D.F."/>
            <person name="Almeida L.G.P."/>
            <person name="Almeida R."/>
            <person name="Alves-Junior L."/>
            <person name="Assuncao E.N."/>
            <person name="Azevedo V.A.C."/>
            <person name="Bogo M.R."/>
            <person name="Brigido M.M."/>
            <person name="Brocchi M."/>
            <person name="Burity H.A."/>
            <person name="Camargo A.A."/>
            <person name="Camargo S.S."/>
            <person name="Carepo M.S."/>
            <person name="Carraro D.M."/>
            <person name="de Mattos Cascardo J.C."/>
            <person name="Castro L.A."/>
            <person name="Cavalcanti G."/>
            <person name="Chemale G."/>
            <person name="Collevatti R.G."/>
            <person name="Cunha C.W."/>
            <person name="Dallagiovanna B."/>
            <person name="Dambros B.P."/>
            <person name="Dellagostin O.A."/>
            <person name="Falcao C."/>
            <person name="Fantinatti-Garboggini F."/>
            <person name="Felipe M.S.S."/>
            <person name="Fiorentin L."/>
            <person name="Franco G.R."/>
            <person name="Freitas N.S.A."/>
            <person name="Frias D."/>
            <person name="Grangeiro T.B."/>
            <person name="Grisard E.C."/>
            <person name="Guimaraes C.T."/>
            <person name="Hungria M."/>
            <person name="Jardim S.N."/>
            <person name="Krieger M.A."/>
            <person name="Laurino J.P."/>
            <person name="Lima L.F.A."/>
            <person name="Lopes M.I."/>
            <person name="Loreto E.L.S."/>
            <person name="Madeira H.M.F."/>
            <person name="Manfio G.P."/>
            <person name="Maranhao A.Q."/>
            <person name="Martinkovics C.T."/>
            <person name="Medeiros S.R.B."/>
            <person name="Moreira M.A.M."/>
            <person name="Neiva M."/>
            <person name="Ramalho-Neto C.E."/>
            <person name="Nicolas M.F."/>
            <person name="Oliveira S.C."/>
            <person name="Paixao R.F.C."/>
            <person name="Pedrosa F.O."/>
            <person name="Pena S.D.J."/>
            <person name="Pereira M."/>
            <person name="Pereira-Ferrari L."/>
            <person name="Piffer I."/>
            <person name="Pinto L.S."/>
            <person name="Potrich D.P."/>
            <person name="Salim A.C.M."/>
            <person name="Santos F.R."/>
            <person name="Schmitt R."/>
            <person name="Schneider M.P.C."/>
            <person name="Schrank A."/>
            <person name="Schrank I.S."/>
            <person name="Schuck A.F."/>
            <person name="Seuanez H.N."/>
            <person name="Silva D.W."/>
            <person name="Silva R."/>
            <person name="Silva S.C."/>
            <person name="Soares C.M.A."/>
            <person name="Souza K.R.L."/>
            <person name="Souza R.C."/>
            <person name="Staats C.C."/>
            <person name="Steffens M.B.R."/>
            <person name="Teixeira S.M.R."/>
            <person name="Urmenyi T.P."/>
            <person name="Vainstein M.H."/>
            <person name="Zuccherato L.W."/>
            <person name="Simpson A.J.G."/>
            <person name="Zaha A."/>
        </authorList>
    </citation>
    <scope>NUCLEOTIDE SEQUENCE [LARGE SCALE GENOMIC DNA]</scope>
    <source>
        <strain>7448</strain>
    </source>
</reference>
<proteinExistence type="inferred from homology"/>
<keyword id="KW-0030">Aminoacyl-tRNA synthetase</keyword>
<keyword id="KW-0067">ATP-binding</keyword>
<keyword id="KW-0963">Cytoplasm</keyword>
<keyword id="KW-0436">Ligase</keyword>
<keyword id="KW-0547">Nucleotide-binding</keyword>
<keyword id="KW-0648">Protein biosynthesis</keyword>
<comment type="catalytic activity">
    <reaction evidence="1">
        <text>tRNA(His) + L-histidine + ATP = L-histidyl-tRNA(His) + AMP + diphosphate + H(+)</text>
        <dbReference type="Rhea" id="RHEA:17313"/>
        <dbReference type="Rhea" id="RHEA-COMP:9665"/>
        <dbReference type="Rhea" id="RHEA-COMP:9689"/>
        <dbReference type="ChEBI" id="CHEBI:15378"/>
        <dbReference type="ChEBI" id="CHEBI:30616"/>
        <dbReference type="ChEBI" id="CHEBI:33019"/>
        <dbReference type="ChEBI" id="CHEBI:57595"/>
        <dbReference type="ChEBI" id="CHEBI:78442"/>
        <dbReference type="ChEBI" id="CHEBI:78527"/>
        <dbReference type="ChEBI" id="CHEBI:456215"/>
        <dbReference type="EC" id="6.1.1.21"/>
    </reaction>
</comment>
<comment type="subunit">
    <text evidence="1">Homodimer.</text>
</comment>
<comment type="subcellular location">
    <subcellularLocation>
        <location evidence="1">Cytoplasm</location>
    </subcellularLocation>
</comment>
<comment type="similarity">
    <text evidence="1">Belongs to the class-II aminoacyl-tRNA synthetase family.</text>
</comment>
<evidence type="ECO:0000255" key="1">
    <source>
        <dbReference type="HAMAP-Rule" id="MF_00127"/>
    </source>
</evidence>
<protein>
    <recommendedName>
        <fullName evidence="1">Histidine--tRNA ligase</fullName>
        <ecNumber evidence="1">6.1.1.21</ecNumber>
    </recommendedName>
    <alternativeName>
        <fullName evidence="1">Histidyl-tRNA synthetase</fullName>
        <shortName evidence="1">HisRS</shortName>
    </alternativeName>
</protein>
<sequence>MKKKLNLCPKGTYDFFGQSAKIFIDVRKVFFDQAKKFNFSYIETPIFEYANIFLTTNQIADIVSKELYKFFDKSGRELALRPEGTAPIMRSVAQHKLFQTEKKFFYFGPMFRYENPQKGRFRQFYQAGFEIINYKKDSLEFQILEIIVLIKSIFKDLGINEYELKINFLSNLTTRNIYEKNLAQYFEKFSDKLEPISKIRIKKNPLRILDDKIEQEKEFVKLAPKINTFWTMEDKNIFNRITSILEEFKISYKVDYNLVRGLDYYDDFVFEFIDTSQTLGTKLALVGGGCYNNLPTKFGLNNFKSIGMAFGIERLIEIIKSKKNIKEQNLDFFLLSFTDKEILLNFKLAKILRKENFLVDLNKTPFSVSKGFQLAKKSGAKFVFFFEKNQAKNYISLKNLQTGKNEQILYTEINFEYLNSIIKASENA</sequence>
<name>SYH_MESH7</name>
<accession>Q4A8C3</accession>